<proteinExistence type="inferred from homology"/>
<protein>
    <recommendedName>
        <fullName evidence="1">Ribulose bisphosphate carboxylase large chain</fullName>
        <shortName evidence="1">RuBisCO large subunit</shortName>
        <ecNumber evidence="1">4.1.1.39</ecNumber>
    </recommendedName>
</protein>
<organism>
    <name type="scientific">Drymophloeus subdistichus</name>
    <name type="common">Palm tree</name>
    <dbReference type="NCBI Taxonomy" id="4716"/>
    <lineage>
        <taxon>Eukaryota</taxon>
        <taxon>Viridiplantae</taxon>
        <taxon>Streptophyta</taxon>
        <taxon>Embryophyta</taxon>
        <taxon>Tracheophyta</taxon>
        <taxon>Spermatophyta</taxon>
        <taxon>Magnoliopsida</taxon>
        <taxon>Liliopsida</taxon>
        <taxon>Arecaceae</taxon>
        <taxon>Arecoideae</taxon>
        <taxon>Areceae</taxon>
        <taxon>Ptychospermatinae</taxon>
        <taxon>Drymophloeus</taxon>
    </lineage>
</organism>
<reference key="1">
    <citation type="journal article" date="1992" name="J. Mol. Evol.">
        <title>Relative rates of nucleotide substitution at the rbcL locus of monocotyledonous plants.</title>
        <authorList>
            <person name="Gaut B.S."/>
            <person name="Muse S.V."/>
            <person name="Clark W.D."/>
            <person name="Clegg M.T."/>
        </authorList>
    </citation>
    <scope>NUCLEOTIDE SEQUENCE [GENOMIC DNA]</scope>
</reference>
<name>RBL_DRYSU</name>
<comment type="function">
    <text evidence="1">RuBisCO catalyzes two reactions: the carboxylation of D-ribulose 1,5-bisphosphate, the primary event in carbon dioxide fixation, as well as the oxidative fragmentation of the pentose substrate in the photorespiration process. Both reactions occur simultaneously and in competition at the same active site.</text>
</comment>
<comment type="catalytic activity">
    <reaction evidence="1">
        <text>2 (2R)-3-phosphoglycerate + 2 H(+) = D-ribulose 1,5-bisphosphate + CO2 + H2O</text>
        <dbReference type="Rhea" id="RHEA:23124"/>
        <dbReference type="ChEBI" id="CHEBI:15377"/>
        <dbReference type="ChEBI" id="CHEBI:15378"/>
        <dbReference type="ChEBI" id="CHEBI:16526"/>
        <dbReference type="ChEBI" id="CHEBI:57870"/>
        <dbReference type="ChEBI" id="CHEBI:58272"/>
        <dbReference type="EC" id="4.1.1.39"/>
    </reaction>
</comment>
<comment type="catalytic activity">
    <reaction evidence="1">
        <text>D-ribulose 1,5-bisphosphate + O2 = 2-phosphoglycolate + (2R)-3-phosphoglycerate + 2 H(+)</text>
        <dbReference type="Rhea" id="RHEA:36631"/>
        <dbReference type="ChEBI" id="CHEBI:15378"/>
        <dbReference type="ChEBI" id="CHEBI:15379"/>
        <dbReference type="ChEBI" id="CHEBI:57870"/>
        <dbReference type="ChEBI" id="CHEBI:58033"/>
        <dbReference type="ChEBI" id="CHEBI:58272"/>
    </reaction>
</comment>
<comment type="cofactor">
    <cofactor evidence="1">
        <name>Mg(2+)</name>
        <dbReference type="ChEBI" id="CHEBI:18420"/>
    </cofactor>
    <text evidence="1">Binds 1 Mg(2+) ion per subunit.</text>
</comment>
<comment type="subunit">
    <text evidence="1">Heterohexadecamer of 8 large chains and 8 small chains; disulfide-linked. The disulfide link is formed within the large subunit homodimers.</text>
</comment>
<comment type="subcellular location">
    <subcellularLocation>
        <location>Plastid</location>
        <location>Chloroplast</location>
    </subcellularLocation>
</comment>
<comment type="PTM">
    <text evidence="1">The disulfide bond which can form in the large chain dimeric partners within the hexadecamer appears to be associated with oxidative stress and protein turnover.</text>
</comment>
<comment type="miscellaneous">
    <text evidence="1">The basic functional RuBisCO is composed of a large chain homodimer in a 'head-to-tail' conformation. In form I RuBisCO this homodimer is arranged in a barrel-like tetramer with the small subunits forming a tetrameric 'cap' on each end of the 'barrel'.</text>
</comment>
<comment type="similarity">
    <text evidence="1">Belongs to the RuBisCO large chain family. Type I subfamily.</text>
</comment>
<sequence>MSPQTETKASVGFKAGVKDYKLTYYTPDYETKDTDILAAFRVTPQPGVPPEEAGAAVAAESSTGTWTTVWTDGLTSLDRYKGRCYHIETVVGEENQYIAYVAYPLDLFEEGSVTNMFTSIVGNVFGFKALRALRLEDLRIPTSYSKTFQGPPHGIQVERDKLNKYGRPLLGCTIKPKLGLSAKNYGRAVYECLRGGLDFTKDDENVNSQPFMRWRDRFLFCTEALYKAQTETGEIKGHYLNATAGTCEEMMKRAVFARELGVPIVMHDYLTGGFTANTSLAHYCRDNGLLLHIHRAMHAVIDRQKNHGMHFRVLAKALRMSGGDHIHAGTVVGKLEGEREMTLGFVDLLRDDFIEKDRSRGIFFTQDWVSMPGVIPVASGGIHVWHMPALTEIFGDDSVLQFGGGTLGHPWGNAPGAVANRVALEACVQARNEGRDLAREGNEIIREASKWSPELAAACEVWKAIKFDSNQ</sequence>
<gene>
    <name evidence="1" type="primary">rbcL</name>
</gene>
<accession>P28259</accession>
<geneLocation type="chloroplast"/>
<dbReference type="EC" id="4.1.1.39" evidence="1"/>
<dbReference type="EMBL" id="M81812">
    <property type="protein sequence ID" value="AAA84214.1"/>
    <property type="molecule type" value="Genomic_DNA"/>
</dbReference>
<dbReference type="SMR" id="P28259"/>
<dbReference type="GO" id="GO:0009507">
    <property type="term" value="C:chloroplast"/>
    <property type="evidence" value="ECO:0007669"/>
    <property type="project" value="UniProtKB-SubCell"/>
</dbReference>
<dbReference type="GO" id="GO:0000287">
    <property type="term" value="F:magnesium ion binding"/>
    <property type="evidence" value="ECO:0007669"/>
    <property type="project" value="InterPro"/>
</dbReference>
<dbReference type="GO" id="GO:0004497">
    <property type="term" value="F:monooxygenase activity"/>
    <property type="evidence" value="ECO:0007669"/>
    <property type="project" value="UniProtKB-KW"/>
</dbReference>
<dbReference type="GO" id="GO:0016984">
    <property type="term" value="F:ribulose-bisphosphate carboxylase activity"/>
    <property type="evidence" value="ECO:0007669"/>
    <property type="project" value="UniProtKB-EC"/>
</dbReference>
<dbReference type="GO" id="GO:0009853">
    <property type="term" value="P:photorespiration"/>
    <property type="evidence" value="ECO:0007669"/>
    <property type="project" value="UniProtKB-KW"/>
</dbReference>
<dbReference type="GO" id="GO:0019253">
    <property type="term" value="P:reductive pentose-phosphate cycle"/>
    <property type="evidence" value="ECO:0007669"/>
    <property type="project" value="UniProtKB-KW"/>
</dbReference>
<dbReference type="CDD" id="cd08212">
    <property type="entry name" value="RuBisCO_large_I"/>
    <property type="match status" value="1"/>
</dbReference>
<dbReference type="FunFam" id="3.20.20.110:FF:000001">
    <property type="entry name" value="Ribulose bisphosphate carboxylase large chain"/>
    <property type="match status" value="1"/>
</dbReference>
<dbReference type="FunFam" id="3.30.70.150:FF:000001">
    <property type="entry name" value="Ribulose bisphosphate carboxylase large chain"/>
    <property type="match status" value="1"/>
</dbReference>
<dbReference type="Gene3D" id="3.20.20.110">
    <property type="entry name" value="Ribulose bisphosphate carboxylase, large subunit, C-terminal domain"/>
    <property type="match status" value="1"/>
</dbReference>
<dbReference type="Gene3D" id="3.30.70.150">
    <property type="entry name" value="RuBisCO large subunit, N-terminal domain"/>
    <property type="match status" value="1"/>
</dbReference>
<dbReference type="HAMAP" id="MF_01338">
    <property type="entry name" value="RuBisCO_L_type1"/>
    <property type="match status" value="1"/>
</dbReference>
<dbReference type="InterPro" id="IPR033966">
    <property type="entry name" value="RuBisCO"/>
</dbReference>
<dbReference type="InterPro" id="IPR020878">
    <property type="entry name" value="RuBisCo_large_chain_AS"/>
</dbReference>
<dbReference type="InterPro" id="IPR000685">
    <property type="entry name" value="RuBisCO_lsu_C"/>
</dbReference>
<dbReference type="InterPro" id="IPR036376">
    <property type="entry name" value="RuBisCO_lsu_C_sf"/>
</dbReference>
<dbReference type="InterPro" id="IPR017443">
    <property type="entry name" value="RuBisCO_lsu_fd_N"/>
</dbReference>
<dbReference type="InterPro" id="IPR036422">
    <property type="entry name" value="RuBisCO_lsu_N_sf"/>
</dbReference>
<dbReference type="InterPro" id="IPR020888">
    <property type="entry name" value="RuBisCO_lsuI"/>
</dbReference>
<dbReference type="NCBIfam" id="NF003252">
    <property type="entry name" value="PRK04208.1"/>
    <property type="match status" value="1"/>
</dbReference>
<dbReference type="PANTHER" id="PTHR42704">
    <property type="entry name" value="RIBULOSE BISPHOSPHATE CARBOXYLASE"/>
    <property type="match status" value="1"/>
</dbReference>
<dbReference type="PANTHER" id="PTHR42704:SF15">
    <property type="entry name" value="RIBULOSE BISPHOSPHATE CARBOXYLASE LARGE CHAIN"/>
    <property type="match status" value="1"/>
</dbReference>
<dbReference type="Pfam" id="PF00016">
    <property type="entry name" value="RuBisCO_large"/>
    <property type="match status" value="1"/>
</dbReference>
<dbReference type="Pfam" id="PF02788">
    <property type="entry name" value="RuBisCO_large_N"/>
    <property type="match status" value="1"/>
</dbReference>
<dbReference type="SFLD" id="SFLDG01052">
    <property type="entry name" value="RuBisCO"/>
    <property type="match status" value="1"/>
</dbReference>
<dbReference type="SFLD" id="SFLDS00014">
    <property type="entry name" value="RuBisCO"/>
    <property type="match status" value="1"/>
</dbReference>
<dbReference type="SFLD" id="SFLDG00301">
    <property type="entry name" value="RuBisCO-like_proteins"/>
    <property type="match status" value="1"/>
</dbReference>
<dbReference type="SUPFAM" id="SSF51649">
    <property type="entry name" value="RuBisCo, C-terminal domain"/>
    <property type="match status" value="1"/>
</dbReference>
<dbReference type="SUPFAM" id="SSF54966">
    <property type="entry name" value="RuBisCO, large subunit, small (N-terminal) domain"/>
    <property type="match status" value="1"/>
</dbReference>
<dbReference type="PROSITE" id="PS00157">
    <property type="entry name" value="RUBISCO_LARGE"/>
    <property type="match status" value="1"/>
</dbReference>
<keyword id="KW-0007">Acetylation</keyword>
<keyword id="KW-0113">Calvin cycle</keyword>
<keyword id="KW-0120">Carbon dioxide fixation</keyword>
<keyword id="KW-0150">Chloroplast</keyword>
<keyword id="KW-1015">Disulfide bond</keyword>
<keyword id="KW-0456">Lyase</keyword>
<keyword id="KW-0460">Magnesium</keyword>
<keyword id="KW-0479">Metal-binding</keyword>
<keyword id="KW-0488">Methylation</keyword>
<keyword id="KW-0503">Monooxygenase</keyword>
<keyword id="KW-0560">Oxidoreductase</keyword>
<keyword id="KW-0601">Photorespiration</keyword>
<keyword id="KW-0602">Photosynthesis</keyword>
<keyword id="KW-0934">Plastid</keyword>
<evidence type="ECO:0000255" key="1">
    <source>
        <dbReference type="HAMAP-Rule" id="MF_01338"/>
    </source>
</evidence>
<feature type="propeptide" id="PRO_0000031205" evidence="1">
    <location>
        <begin position="1"/>
        <end position="2"/>
    </location>
</feature>
<feature type="chain" id="PRO_0000031206" description="Ribulose bisphosphate carboxylase large chain">
    <location>
        <begin position="3"/>
        <end position="471" status="greater than"/>
    </location>
</feature>
<feature type="active site" description="Proton acceptor" evidence="1">
    <location>
        <position position="175"/>
    </location>
</feature>
<feature type="active site" description="Proton acceptor" evidence="1">
    <location>
        <position position="294"/>
    </location>
</feature>
<feature type="binding site" description="in homodimeric partner" evidence="1">
    <location>
        <position position="123"/>
    </location>
    <ligand>
        <name>substrate</name>
    </ligand>
</feature>
<feature type="binding site" evidence="1">
    <location>
        <position position="173"/>
    </location>
    <ligand>
        <name>substrate</name>
    </ligand>
</feature>
<feature type="binding site" evidence="1">
    <location>
        <position position="177"/>
    </location>
    <ligand>
        <name>substrate</name>
    </ligand>
</feature>
<feature type="binding site" description="via carbamate group" evidence="1">
    <location>
        <position position="201"/>
    </location>
    <ligand>
        <name>Mg(2+)</name>
        <dbReference type="ChEBI" id="CHEBI:18420"/>
    </ligand>
</feature>
<feature type="binding site" evidence="1">
    <location>
        <position position="203"/>
    </location>
    <ligand>
        <name>Mg(2+)</name>
        <dbReference type="ChEBI" id="CHEBI:18420"/>
    </ligand>
</feature>
<feature type="binding site" evidence="1">
    <location>
        <position position="204"/>
    </location>
    <ligand>
        <name>Mg(2+)</name>
        <dbReference type="ChEBI" id="CHEBI:18420"/>
    </ligand>
</feature>
<feature type="binding site" evidence="1">
    <location>
        <position position="295"/>
    </location>
    <ligand>
        <name>substrate</name>
    </ligand>
</feature>
<feature type="binding site" evidence="1">
    <location>
        <position position="327"/>
    </location>
    <ligand>
        <name>substrate</name>
    </ligand>
</feature>
<feature type="binding site" evidence="1">
    <location>
        <position position="379"/>
    </location>
    <ligand>
        <name>substrate</name>
    </ligand>
</feature>
<feature type="site" description="Transition state stabilizer" evidence="1">
    <location>
        <position position="334"/>
    </location>
</feature>
<feature type="modified residue" description="N-acetylproline" evidence="1">
    <location>
        <position position="3"/>
    </location>
</feature>
<feature type="modified residue" description="N6,N6,N6-trimethyllysine" evidence="1">
    <location>
        <position position="14"/>
    </location>
</feature>
<feature type="modified residue" description="N6-carboxylysine" evidence="1">
    <location>
        <position position="201"/>
    </location>
</feature>
<feature type="disulfide bond" description="Interchain; in linked form" evidence="1">
    <location>
        <position position="247"/>
    </location>
</feature>
<feature type="non-terminal residue">
    <location>
        <position position="471"/>
    </location>
</feature>